<dbReference type="EMBL" id="CP001120">
    <property type="protein sequence ID" value="ACF67716.1"/>
    <property type="molecule type" value="Genomic_DNA"/>
</dbReference>
<dbReference type="RefSeq" id="WP_000042506.1">
    <property type="nucleotide sequence ID" value="NC_011083.1"/>
</dbReference>
<dbReference type="SMR" id="B4TC52"/>
<dbReference type="KEGG" id="seh:SeHA_C0925"/>
<dbReference type="HOGENOM" id="CLU_009621_2_1_6"/>
<dbReference type="Proteomes" id="UP000001866">
    <property type="component" value="Chromosome"/>
</dbReference>
<dbReference type="GO" id="GO:0005737">
    <property type="term" value="C:cytoplasm"/>
    <property type="evidence" value="ECO:0007669"/>
    <property type="project" value="UniProtKB-SubCell"/>
</dbReference>
<dbReference type="GO" id="GO:0009380">
    <property type="term" value="C:excinuclease repair complex"/>
    <property type="evidence" value="ECO:0007669"/>
    <property type="project" value="InterPro"/>
</dbReference>
<dbReference type="GO" id="GO:0005524">
    <property type="term" value="F:ATP binding"/>
    <property type="evidence" value="ECO:0007669"/>
    <property type="project" value="UniProtKB-UniRule"/>
</dbReference>
<dbReference type="GO" id="GO:0016887">
    <property type="term" value="F:ATP hydrolysis activity"/>
    <property type="evidence" value="ECO:0007669"/>
    <property type="project" value="InterPro"/>
</dbReference>
<dbReference type="GO" id="GO:0003677">
    <property type="term" value="F:DNA binding"/>
    <property type="evidence" value="ECO:0007669"/>
    <property type="project" value="UniProtKB-UniRule"/>
</dbReference>
<dbReference type="GO" id="GO:0009381">
    <property type="term" value="F:excinuclease ABC activity"/>
    <property type="evidence" value="ECO:0007669"/>
    <property type="project" value="UniProtKB-UniRule"/>
</dbReference>
<dbReference type="GO" id="GO:0004386">
    <property type="term" value="F:helicase activity"/>
    <property type="evidence" value="ECO:0007669"/>
    <property type="project" value="UniProtKB-KW"/>
</dbReference>
<dbReference type="GO" id="GO:0006289">
    <property type="term" value="P:nucleotide-excision repair"/>
    <property type="evidence" value="ECO:0007669"/>
    <property type="project" value="UniProtKB-UniRule"/>
</dbReference>
<dbReference type="GO" id="GO:0009432">
    <property type="term" value="P:SOS response"/>
    <property type="evidence" value="ECO:0007669"/>
    <property type="project" value="UniProtKB-UniRule"/>
</dbReference>
<dbReference type="CDD" id="cd17916">
    <property type="entry name" value="DEXHc_UvrB"/>
    <property type="match status" value="1"/>
</dbReference>
<dbReference type="CDD" id="cd18790">
    <property type="entry name" value="SF2_C_UvrB"/>
    <property type="match status" value="1"/>
</dbReference>
<dbReference type="FunFam" id="3.40.50.300:FF:000257">
    <property type="entry name" value="UvrABC system protein B"/>
    <property type="match status" value="1"/>
</dbReference>
<dbReference type="FunFam" id="3.40.50.300:FF:000401">
    <property type="entry name" value="UvrABC system protein B"/>
    <property type="match status" value="1"/>
</dbReference>
<dbReference type="FunFam" id="3.40.50.300:FF:000477">
    <property type="entry name" value="UvrABC system protein B"/>
    <property type="match status" value="1"/>
</dbReference>
<dbReference type="Gene3D" id="6.10.140.240">
    <property type="match status" value="1"/>
</dbReference>
<dbReference type="Gene3D" id="3.40.50.300">
    <property type="entry name" value="P-loop containing nucleotide triphosphate hydrolases"/>
    <property type="match status" value="3"/>
</dbReference>
<dbReference type="Gene3D" id="4.10.860.10">
    <property type="entry name" value="UVR domain"/>
    <property type="match status" value="1"/>
</dbReference>
<dbReference type="HAMAP" id="MF_00204">
    <property type="entry name" value="UvrB"/>
    <property type="match status" value="1"/>
</dbReference>
<dbReference type="InterPro" id="IPR006935">
    <property type="entry name" value="Helicase/UvrB_N"/>
</dbReference>
<dbReference type="InterPro" id="IPR014001">
    <property type="entry name" value="Helicase_ATP-bd"/>
</dbReference>
<dbReference type="InterPro" id="IPR001650">
    <property type="entry name" value="Helicase_C-like"/>
</dbReference>
<dbReference type="InterPro" id="IPR027417">
    <property type="entry name" value="P-loop_NTPase"/>
</dbReference>
<dbReference type="InterPro" id="IPR001943">
    <property type="entry name" value="UVR_dom"/>
</dbReference>
<dbReference type="InterPro" id="IPR036876">
    <property type="entry name" value="UVR_dom_sf"/>
</dbReference>
<dbReference type="InterPro" id="IPR004807">
    <property type="entry name" value="UvrB"/>
</dbReference>
<dbReference type="InterPro" id="IPR041471">
    <property type="entry name" value="UvrB_inter"/>
</dbReference>
<dbReference type="InterPro" id="IPR024759">
    <property type="entry name" value="UvrB_YAD/RRR_dom"/>
</dbReference>
<dbReference type="NCBIfam" id="NF003673">
    <property type="entry name" value="PRK05298.1"/>
    <property type="match status" value="1"/>
</dbReference>
<dbReference type="NCBIfam" id="TIGR00631">
    <property type="entry name" value="uvrb"/>
    <property type="match status" value="1"/>
</dbReference>
<dbReference type="PANTHER" id="PTHR24029">
    <property type="entry name" value="UVRABC SYSTEM PROTEIN B"/>
    <property type="match status" value="1"/>
</dbReference>
<dbReference type="PANTHER" id="PTHR24029:SF0">
    <property type="entry name" value="UVRABC SYSTEM PROTEIN B"/>
    <property type="match status" value="1"/>
</dbReference>
<dbReference type="Pfam" id="PF00271">
    <property type="entry name" value="Helicase_C"/>
    <property type="match status" value="1"/>
</dbReference>
<dbReference type="Pfam" id="PF04851">
    <property type="entry name" value="ResIII"/>
    <property type="match status" value="1"/>
</dbReference>
<dbReference type="Pfam" id="PF02151">
    <property type="entry name" value="UVR"/>
    <property type="match status" value="1"/>
</dbReference>
<dbReference type="Pfam" id="PF12344">
    <property type="entry name" value="UvrB"/>
    <property type="match status" value="1"/>
</dbReference>
<dbReference type="Pfam" id="PF17757">
    <property type="entry name" value="UvrB_inter"/>
    <property type="match status" value="1"/>
</dbReference>
<dbReference type="SMART" id="SM00487">
    <property type="entry name" value="DEXDc"/>
    <property type="match status" value="1"/>
</dbReference>
<dbReference type="SMART" id="SM00490">
    <property type="entry name" value="HELICc"/>
    <property type="match status" value="1"/>
</dbReference>
<dbReference type="SUPFAM" id="SSF46600">
    <property type="entry name" value="C-terminal UvrC-binding domain of UvrB"/>
    <property type="match status" value="1"/>
</dbReference>
<dbReference type="SUPFAM" id="SSF52540">
    <property type="entry name" value="P-loop containing nucleoside triphosphate hydrolases"/>
    <property type="match status" value="2"/>
</dbReference>
<dbReference type="PROSITE" id="PS51192">
    <property type="entry name" value="HELICASE_ATP_BIND_1"/>
    <property type="match status" value="1"/>
</dbReference>
<dbReference type="PROSITE" id="PS51194">
    <property type="entry name" value="HELICASE_CTER"/>
    <property type="match status" value="1"/>
</dbReference>
<dbReference type="PROSITE" id="PS50151">
    <property type="entry name" value="UVR"/>
    <property type="match status" value="1"/>
</dbReference>
<accession>B4TC52</accession>
<evidence type="ECO:0000255" key="1">
    <source>
        <dbReference type="HAMAP-Rule" id="MF_00204"/>
    </source>
</evidence>
<name>UVRB_SALHS</name>
<proteinExistence type="inferred from homology"/>
<keyword id="KW-0067">ATP-binding</keyword>
<keyword id="KW-0963">Cytoplasm</keyword>
<keyword id="KW-0227">DNA damage</keyword>
<keyword id="KW-0228">DNA excision</keyword>
<keyword id="KW-0234">DNA repair</keyword>
<keyword id="KW-0267">Excision nuclease</keyword>
<keyword id="KW-0347">Helicase</keyword>
<keyword id="KW-0378">Hydrolase</keyword>
<keyword id="KW-0547">Nucleotide-binding</keyword>
<keyword id="KW-0742">SOS response</keyword>
<gene>
    <name evidence="1" type="primary">uvrB</name>
    <name type="ordered locus">SeHA_C0925</name>
</gene>
<feature type="chain" id="PRO_1000099564" description="UvrABC system protein B">
    <location>
        <begin position="1"/>
        <end position="673"/>
    </location>
</feature>
<feature type="domain" description="Helicase ATP-binding" evidence="1">
    <location>
        <begin position="26"/>
        <end position="183"/>
    </location>
</feature>
<feature type="domain" description="Helicase C-terminal" evidence="1">
    <location>
        <begin position="431"/>
        <end position="597"/>
    </location>
</feature>
<feature type="domain" description="UVR" evidence="1">
    <location>
        <begin position="633"/>
        <end position="668"/>
    </location>
</feature>
<feature type="short sequence motif" description="Beta-hairpin">
    <location>
        <begin position="92"/>
        <end position="115"/>
    </location>
</feature>
<feature type="binding site" evidence="1">
    <location>
        <begin position="39"/>
        <end position="46"/>
    </location>
    <ligand>
        <name>ATP</name>
        <dbReference type="ChEBI" id="CHEBI:30616"/>
    </ligand>
</feature>
<reference key="1">
    <citation type="journal article" date="2011" name="J. Bacteriol.">
        <title>Comparative genomics of 28 Salmonella enterica isolates: evidence for CRISPR-mediated adaptive sublineage evolution.</title>
        <authorList>
            <person name="Fricke W.F."/>
            <person name="Mammel M.K."/>
            <person name="McDermott P.F."/>
            <person name="Tartera C."/>
            <person name="White D.G."/>
            <person name="Leclerc J.E."/>
            <person name="Ravel J."/>
            <person name="Cebula T.A."/>
        </authorList>
    </citation>
    <scope>NUCLEOTIDE SEQUENCE [LARGE SCALE GENOMIC DNA]</scope>
    <source>
        <strain>SL476</strain>
    </source>
</reference>
<protein>
    <recommendedName>
        <fullName evidence="1">UvrABC system protein B</fullName>
        <shortName evidence="1">Protein UvrB</shortName>
    </recommendedName>
    <alternativeName>
        <fullName evidence="1">Excinuclease ABC subunit B</fullName>
    </alternativeName>
</protein>
<comment type="function">
    <text evidence="1">The UvrABC repair system catalyzes the recognition and processing of DNA lesions. A damage recognition complex composed of 2 UvrA and 2 UvrB subunits scans DNA for abnormalities. Upon binding of the UvrA(2)B(2) complex to a putative damaged site, the DNA wraps around one UvrB monomer. DNA wrap is dependent on ATP binding by UvrB and probably causes local melting of the DNA helix, facilitating insertion of UvrB beta-hairpin between the DNA strands. Then UvrB probes one DNA strand for the presence of a lesion. If a lesion is found the UvrA subunits dissociate and the UvrB-DNA preincision complex is formed. This complex is subsequently bound by UvrC and the second UvrB is released. If no lesion is found, the DNA wraps around the other UvrB subunit that will check the other stand for damage.</text>
</comment>
<comment type="subunit">
    <text evidence="1">Forms a heterotetramer with UvrA during the search for lesions. Interacts with UvrC in an incision complex.</text>
</comment>
<comment type="subcellular location">
    <subcellularLocation>
        <location evidence="1">Cytoplasm</location>
    </subcellularLocation>
</comment>
<comment type="domain">
    <text evidence="1">The beta-hairpin motif is involved in DNA binding.</text>
</comment>
<comment type="similarity">
    <text evidence="1">Belongs to the UvrB family.</text>
</comment>
<organism>
    <name type="scientific">Salmonella heidelberg (strain SL476)</name>
    <dbReference type="NCBI Taxonomy" id="454169"/>
    <lineage>
        <taxon>Bacteria</taxon>
        <taxon>Pseudomonadati</taxon>
        <taxon>Pseudomonadota</taxon>
        <taxon>Gammaproteobacteria</taxon>
        <taxon>Enterobacterales</taxon>
        <taxon>Enterobacteriaceae</taxon>
        <taxon>Salmonella</taxon>
    </lineage>
</organism>
<sequence>MSKPFKLNSAFKPSGDQPDAIRRLEEGLEDGLAHQTLLGVTGSGKTFTIANVIADLQRPTMVLAPNKTLAAQLYGEMKEFFPENAVEYFVSYYDYYQPEAYVPSSDTFIEKDASVNEHIEQMRLSATKALLERRDVVVVASVSAIYGLGDPDLYLKMMLHLTVGMLIDQRAILRRLAELQYTRNDQAFQRGTFRVRGEVIDIFPAESDDIALRVELFDEEVERLSLFDPLTGQVESTVPRYTIYPKTHYVTPRERILQAMEEIKDELADRRKVLLANNKLLEEQRLSQRTQFDLEMMNELGYCSGIENYSRFLSGRGPGEPPPTLFDYLPADGLLVVDESHVTIPQIGGMYRGDRARKETLVEYGFRLPSAMDNRPLKFEEFEALAPQTIYVSATPGNYELEKSGDEVVDQVVRPTGLLDPIIEVRPVATQVDDLLSEIRQRAAINERVLVTTLTKRMAEDLTEYLEEHGERVRYLHSDIDTVERMEIIRDLRLGEFDVLVGINLLREGLDMPEVSLVAILDADKEGFLRSERSLIQTIGRAARNVNGKAILYGDKITPSMAKAIGETERRREKQQKYNEEHGITPQGLNKKVVDILALGQNIAKTKAKGKGKGRSTAKAGIVELDMTPKALQQKIHELEGQMMQHAQNLEFEEAAQIRDQLHQLRELFIAAS</sequence>